<comment type="function">
    <text>Probably involved in the processing of the precursor of m1-toxin and alpha-factor.</text>
</comment>
<comment type="cofactor">
    <cofactor evidence="1">
        <name>Ca(2+)</name>
        <dbReference type="ChEBI" id="CHEBI:29108"/>
    </cofactor>
</comment>
<comment type="subcellular location">
    <subcellularLocation>
        <location evidence="6">Membrane</location>
        <topology evidence="6">Single-pass membrane protein</topology>
    </subcellularLocation>
</comment>
<comment type="similarity">
    <text evidence="6">Belongs to the peptidase S8 family. Furin subfamily.</text>
</comment>
<comment type="sequence caution" evidence="6">
    <conflict type="frameshift">
        <sequence resource="EMBL-CDS" id="CAA30088"/>
    </conflict>
</comment>
<accession>P09231</accession>
<accession>Q6CQ47</accession>
<feature type="signal peptide" evidence="2">
    <location>
        <begin position="1"/>
        <end position="24"/>
    </location>
</feature>
<feature type="chain" id="PRO_0000027040" description="Protease KEX1">
    <location>
        <begin position="25"/>
        <end position="756"/>
    </location>
</feature>
<feature type="transmembrane region" description="Helical" evidence="2">
    <location>
        <begin position="641"/>
        <end position="661"/>
    </location>
</feature>
<feature type="domain" description="Peptidase S8" evidence="4">
    <location>
        <begin position="130"/>
        <end position="440"/>
    </location>
</feature>
<feature type="domain" description="P/Homo B" evidence="3">
    <location>
        <begin position="449"/>
        <end position="583"/>
    </location>
</feature>
<feature type="region of interest" description="Disordered" evidence="5">
    <location>
        <begin position="599"/>
        <end position="632"/>
    </location>
</feature>
<feature type="region of interest" description="Disordered" evidence="5">
    <location>
        <begin position="715"/>
        <end position="756"/>
    </location>
</feature>
<feature type="compositionally biased region" description="Low complexity" evidence="5">
    <location>
        <begin position="606"/>
        <end position="628"/>
    </location>
</feature>
<feature type="compositionally biased region" description="Polar residues" evidence="5">
    <location>
        <begin position="721"/>
        <end position="756"/>
    </location>
</feature>
<feature type="active site" description="Charge relay system" evidence="4">
    <location>
        <position position="164"/>
    </location>
</feature>
<feature type="active site" description="Charge relay system" evidence="4">
    <location>
        <position position="202"/>
    </location>
</feature>
<feature type="active site" description="Charge relay system" evidence="4">
    <location>
        <position position="373"/>
    </location>
</feature>
<feature type="glycosylation site" description="N-linked (GlcNAc...) asparagine" evidence="2">
    <location>
        <position position="121"/>
    </location>
</feature>
<feature type="glycosylation site" description="N-linked (GlcNAc...) asparagine" evidence="2">
    <location>
        <position position="144"/>
    </location>
</feature>
<feature type="glycosylation site" description="N-linked (GlcNAc...) asparagine" evidence="2">
    <location>
        <position position="152"/>
    </location>
</feature>
<feature type="glycosylation site" description="N-linked (GlcNAc...) asparagine" evidence="2">
    <location>
        <position position="392"/>
    </location>
</feature>
<feature type="glycosylation site" description="N-linked (GlcNAc...) asparagine" evidence="2">
    <location>
        <position position="538"/>
    </location>
</feature>
<feature type="disulfide bond" evidence="1">
    <location>
        <begin position="218"/>
        <end position="365"/>
    </location>
</feature>
<feature type="disulfide bond" evidence="1">
    <location>
        <begin position="310"/>
        <end position="340"/>
    </location>
</feature>
<feature type="sequence conflict" description="In Ref. 1; CAA30088." evidence="6" ref="1">
    <original>S</original>
    <variation>A</variation>
    <location>
        <position position="688"/>
    </location>
</feature>
<evidence type="ECO:0000250" key="1"/>
<evidence type="ECO:0000255" key="2"/>
<evidence type="ECO:0000255" key="3">
    <source>
        <dbReference type="PROSITE-ProRule" id="PRU01173"/>
    </source>
</evidence>
<evidence type="ECO:0000255" key="4">
    <source>
        <dbReference type="PROSITE-ProRule" id="PRU01240"/>
    </source>
</evidence>
<evidence type="ECO:0000256" key="5">
    <source>
        <dbReference type="SAM" id="MobiDB-lite"/>
    </source>
</evidence>
<evidence type="ECO:0000305" key="6"/>
<gene>
    <name type="primary">KEX1</name>
    <name type="ordered locus">KLLA0D19811g</name>
</gene>
<sequence length="756" mass="83713">MILSSQLMLALIAVSGYGKAMQVPKKDHENRQYFAIESYDDVGNLLAEHSDWSFEHDVRGLANHYVFSKPLQSLGKRDAIDTGYSENIIDFHDLPPVQLHKRLPIGDSSMEQIQNARILFNISDPLFDQQWHLINPNYPGNDVNVTGLWKENITGYGVVAALVDDGLDYENEDLKDNFCVEGSWDFNDNNPLPKPRLKDDYHGTRCAGEIAAFRNDICGVGVAYNSKVSGIRILSGQITAEDEAASLIYGLDVNDIYSCSWGPSDDGKTMQAPDTLVKKAIIKGVTEGRDAKGALYVFASGNGGMFGDSCNFDGYTNSIFSITVGAIDWKGLHPPYSESCSAVMVVTYSSGSGNYIKTTDLDEKCSNTHGGTSAAAPLAAGIYTLVLEANPNLTWRDVQYLSILSSEEINPHDGKWQDTAMGKRYSHTYGFGKLDAYNIVHMAKSWINVNPQGWLYLPTIVEKQSISNSDEVIESTVSVSAEEFKQNNLKRLEHVTVTVDIDAPYRGHVLVDLISPDGVTSTLATARRLDKNRYGFQNWTFMSVAHWGSSGVGSWKLKVKSTHDNEIVTLKSWRLKMFGETIDAKKAKVISYGNDKEDAEVKSTESKTTTPTAQTSSFTTTSGEETSGANKLPRPEQAAQLYLAIFVIGAIVIIIYYLFFLKSRRIIRRSRAEAYEFDIIDTDSEYDSSINQTAESISGEVNDDNLEDFNFDINEEELSPRESSSNNPFGNESLESFDNSPDHTSNLLGQNSIPNK</sequence>
<reference key="1">
    <citation type="journal article" date="1988" name="FEBS Lett.">
        <title>The Kluyveromyces lactis KEX1 gene encodes a subtilisin-type serine proteinase.</title>
        <authorList>
            <person name="Tanguy-Rougeau C."/>
            <person name="Wesolowski-Louvel M."/>
            <person name="Fukuhara H."/>
        </authorList>
    </citation>
    <scope>NUCLEOTIDE SEQUENCE [GENOMIC DNA]</scope>
    <source>
        <strain>ATCC 76492 / CBS 2359/152 / CLIB 210</strain>
    </source>
</reference>
<reference key="2">
    <citation type="journal article" date="2004" name="Nature">
        <title>Genome evolution in yeasts.</title>
        <authorList>
            <person name="Dujon B."/>
            <person name="Sherman D."/>
            <person name="Fischer G."/>
            <person name="Durrens P."/>
            <person name="Casaregola S."/>
            <person name="Lafontaine I."/>
            <person name="de Montigny J."/>
            <person name="Marck C."/>
            <person name="Neuveglise C."/>
            <person name="Talla E."/>
            <person name="Goffard N."/>
            <person name="Frangeul L."/>
            <person name="Aigle M."/>
            <person name="Anthouard V."/>
            <person name="Babour A."/>
            <person name="Barbe V."/>
            <person name="Barnay S."/>
            <person name="Blanchin S."/>
            <person name="Beckerich J.-M."/>
            <person name="Beyne E."/>
            <person name="Bleykasten C."/>
            <person name="Boisrame A."/>
            <person name="Boyer J."/>
            <person name="Cattolico L."/>
            <person name="Confanioleri F."/>
            <person name="de Daruvar A."/>
            <person name="Despons L."/>
            <person name="Fabre E."/>
            <person name="Fairhead C."/>
            <person name="Ferry-Dumazet H."/>
            <person name="Groppi A."/>
            <person name="Hantraye F."/>
            <person name="Hennequin C."/>
            <person name="Jauniaux N."/>
            <person name="Joyet P."/>
            <person name="Kachouri R."/>
            <person name="Kerrest A."/>
            <person name="Koszul R."/>
            <person name="Lemaire M."/>
            <person name="Lesur I."/>
            <person name="Ma L."/>
            <person name="Muller H."/>
            <person name="Nicaud J.-M."/>
            <person name="Nikolski M."/>
            <person name="Oztas S."/>
            <person name="Ozier-Kalogeropoulos O."/>
            <person name="Pellenz S."/>
            <person name="Potier S."/>
            <person name="Richard G.-F."/>
            <person name="Straub M.-L."/>
            <person name="Suleau A."/>
            <person name="Swennen D."/>
            <person name="Tekaia F."/>
            <person name="Wesolowski-Louvel M."/>
            <person name="Westhof E."/>
            <person name="Wirth B."/>
            <person name="Zeniou-Meyer M."/>
            <person name="Zivanovic Y."/>
            <person name="Bolotin-Fukuhara M."/>
            <person name="Thierry A."/>
            <person name="Bouchier C."/>
            <person name="Caudron B."/>
            <person name="Scarpelli C."/>
            <person name="Gaillardin C."/>
            <person name="Weissenbach J."/>
            <person name="Wincker P."/>
            <person name="Souciet J.-L."/>
        </authorList>
    </citation>
    <scope>NUCLEOTIDE SEQUENCE [LARGE SCALE GENOMIC DNA]</scope>
    <source>
        <strain>ATCC 8585 / CBS 2359 / DSM 70799 / NBRC 1267 / NRRL Y-1140 / WM37</strain>
    </source>
</reference>
<proteinExistence type="inferred from homology"/>
<organism>
    <name type="scientific">Kluyveromyces lactis (strain ATCC 8585 / CBS 2359 / DSM 70799 / NBRC 1267 / NRRL Y-1140 / WM37)</name>
    <name type="common">Yeast</name>
    <name type="synonym">Candida sphaerica</name>
    <dbReference type="NCBI Taxonomy" id="284590"/>
    <lineage>
        <taxon>Eukaryota</taxon>
        <taxon>Fungi</taxon>
        <taxon>Dikarya</taxon>
        <taxon>Ascomycota</taxon>
        <taxon>Saccharomycotina</taxon>
        <taxon>Saccharomycetes</taxon>
        <taxon>Saccharomycetales</taxon>
        <taxon>Saccharomycetaceae</taxon>
        <taxon>Kluyveromyces</taxon>
    </lineage>
</organism>
<dbReference type="EC" id="3.4.21.-"/>
<dbReference type="EMBL" id="X07038">
    <property type="protein sequence ID" value="CAA30088.1"/>
    <property type="status" value="ALT_FRAME"/>
    <property type="molecule type" value="Genomic_DNA"/>
</dbReference>
<dbReference type="EMBL" id="CR382124">
    <property type="protein sequence ID" value="CAH01038.1"/>
    <property type="molecule type" value="Genomic_DNA"/>
</dbReference>
<dbReference type="PIR" id="S01013">
    <property type="entry name" value="S01013"/>
</dbReference>
<dbReference type="RefSeq" id="XP_453942.1">
    <property type="nucleotide sequence ID" value="XM_453942.1"/>
</dbReference>
<dbReference type="SMR" id="P09231"/>
<dbReference type="FunCoup" id="P09231">
    <property type="interactions" value="177"/>
</dbReference>
<dbReference type="STRING" id="284590.P09231"/>
<dbReference type="GlyCosmos" id="P09231">
    <property type="glycosylation" value="5 sites, No reported glycans"/>
</dbReference>
<dbReference type="PaxDb" id="284590-P09231"/>
<dbReference type="KEGG" id="kla:KLLA0_D19811g"/>
<dbReference type="eggNOG" id="KOG3525">
    <property type="taxonomic scope" value="Eukaryota"/>
</dbReference>
<dbReference type="HOGENOM" id="CLU_002976_2_1_1"/>
<dbReference type="InParanoid" id="P09231"/>
<dbReference type="OMA" id="AYEFDII"/>
<dbReference type="Proteomes" id="UP000000598">
    <property type="component" value="Chromosome D"/>
</dbReference>
<dbReference type="GO" id="GO:0000139">
    <property type="term" value="C:Golgi membrane"/>
    <property type="evidence" value="ECO:0007669"/>
    <property type="project" value="TreeGrafter"/>
</dbReference>
<dbReference type="GO" id="GO:0005802">
    <property type="term" value="C:trans-Golgi network"/>
    <property type="evidence" value="ECO:0007669"/>
    <property type="project" value="TreeGrafter"/>
</dbReference>
<dbReference type="GO" id="GO:0004252">
    <property type="term" value="F:serine-type endopeptidase activity"/>
    <property type="evidence" value="ECO:0007669"/>
    <property type="project" value="InterPro"/>
</dbReference>
<dbReference type="GO" id="GO:0016485">
    <property type="term" value="P:protein processing"/>
    <property type="evidence" value="ECO:0007669"/>
    <property type="project" value="TreeGrafter"/>
</dbReference>
<dbReference type="CDD" id="cd04059">
    <property type="entry name" value="Peptidases_S8_Protein_convertases_Kexins_Furin-like"/>
    <property type="match status" value="1"/>
</dbReference>
<dbReference type="FunFam" id="3.40.50.200:FF:000005">
    <property type="entry name" value="Proprotein convertase subtilisin/kexin type 7"/>
    <property type="match status" value="1"/>
</dbReference>
<dbReference type="FunFam" id="2.60.120.260:FF:000026">
    <property type="entry name" value="proprotein convertase subtilisin/kexin type 7"/>
    <property type="match status" value="1"/>
</dbReference>
<dbReference type="Gene3D" id="2.60.120.260">
    <property type="entry name" value="Galactose-binding domain-like"/>
    <property type="match status" value="1"/>
</dbReference>
<dbReference type="Gene3D" id="3.40.50.200">
    <property type="entry name" value="Peptidase S8/S53 domain"/>
    <property type="match status" value="1"/>
</dbReference>
<dbReference type="InterPro" id="IPR008979">
    <property type="entry name" value="Galactose-bd-like_sf"/>
</dbReference>
<dbReference type="InterPro" id="IPR034182">
    <property type="entry name" value="Kexin/furin"/>
</dbReference>
<dbReference type="InterPro" id="IPR002884">
    <property type="entry name" value="P_dom"/>
</dbReference>
<dbReference type="InterPro" id="IPR000209">
    <property type="entry name" value="Peptidase_S8/S53_dom"/>
</dbReference>
<dbReference type="InterPro" id="IPR036852">
    <property type="entry name" value="Peptidase_S8/S53_dom_sf"/>
</dbReference>
<dbReference type="InterPro" id="IPR023827">
    <property type="entry name" value="Peptidase_S8_Asp-AS"/>
</dbReference>
<dbReference type="InterPro" id="IPR022398">
    <property type="entry name" value="Peptidase_S8_His-AS"/>
</dbReference>
<dbReference type="InterPro" id="IPR023828">
    <property type="entry name" value="Peptidase_S8_Ser-AS"/>
</dbReference>
<dbReference type="InterPro" id="IPR015500">
    <property type="entry name" value="Peptidase_S8_subtilisin-rel"/>
</dbReference>
<dbReference type="PANTHER" id="PTHR42884:SF14">
    <property type="entry name" value="NEUROENDOCRINE CONVERTASE 1"/>
    <property type="match status" value="1"/>
</dbReference>
<dbReference type="PANTHER" id="PTHR42884">
    <property type="entry name" value="PROPROTEIN CONVERTASE SUBTILISIN/KEXIN-RELATED"/>
    <property type="match status" value="1"/>
</dbReference>
<dbReference type="Pfam" id="PF01483">
    <property type="entry name" value="P_proprotein"/>
    <property type="match status" value="1"/>
</dbReference>
<dbReference type="Pfam" id="PF00082">
    <property type="entry name" value="Peptidase_S8"/>
    <property type="match status" value="1"/>
</dbReference>
<dbReference type="PRINTS" id="PR00723">
    <property type="entry name" value="SUBTILISIN"/>
</dbReference>
<dbReference type="SUPFAM" id="SSF49785">
    <property type="entry name" value="Galactose-binding domain-like"/>
    <property type="match status" value="1"/>
</dbReference>
<dbReference type="SUPFAM" id="SSF52743">
    <property type="entry name" value="Subtilisin-like"/>
    <property type="match status" value="1"/>
</dbReference>
<dbReference type="PROSITE" id="PS51829">
    <property type="entry name" value="P_HOMO_B"/>
    <property type="match status" value="1"/>
</dbReference>
<dbReference type="PROSITE" id="PS51892">
    <property type="entry name" value="SUBTILASE"/>
    <property type="match status" value="1"/>
</dbReference>
<dbReference type="PROSITE" id="PS00136">
    <property type="entry name" value="SUBTILASE_ASP"/>
    <property type="match status" value="1"/>
</dbReference>
<dbReference type="PROSITE" id="PS00137">
    <property type="entry name" value="SUBTILASE_HIS"/>
    <property type="match status" value="1"/>
</dbReference>
<dbReference type="PROSITE" id="PS00138">
    <property type="entry name" value="SUBTILASE_SER"/>
    <property type="match status" value="1"/>
</dbReference>
<protein>
    <recommendedName>
        <fullName>Protease KEX1</fullName>
        <ecNumber>3.4.21.-</ecNumber>
    </recommendedName>
</protein>
<name>KEX1A_KLULA</name>
<keyword id="KW-0106">Calcium</keyword>
<keyword id="KW-1015">Disulfide bond</keyword>
<keyword id="KW-0325">Glycoprotein</keyword>
<keyword id="KW-0378">Hydrolase</keyword>
<keyword id="KW-0472">Membrane</keyword>
<keyword id="KW-0645">Protease</keyword>
<keyword id="KW-1185">Reference proteome</keyword>
<keyword id="KW-0720">Serine protease</keyword>
<keyword id="KW-0732">Signal</keyword>
<keyword id="KW-0812">Transmembrane</keyword>
<keyword id="KW-1133">Transmembrane helix</keyword>
<keyword id="KW-0865">Zymogen</keyword>